<keyword id="KW-0010">Activator</keyword>
<keyword id="KW-0238">DNA-binding</keyword>
<keyword id="KW-0244">Early protein</keyword>
<keyword id="KW-1078">G1/S host cell cycle checkpoint dysregulation by virus</keyword>
<keyword id="KW-1035">Host cytoplasm</keyword>
<keyword id="KW-1048">Host nucleus</keyword>
<keyword id="KW-0945">Host-virus interaction</keyword>
<keyword id="KW-1090">Inhibition of host innate immune response by virus</keyword>
<keyword id="KW-1114">Inhibition of host interferon signaling pathway by virus</keyword>
<keyword id="KW-0922">Interferon antiviral system evasion</keyword>
<keyword id="KW-0479">Metal-binding</keyword>
<keyword id="KW-1121">Modulation of host cell cycle by virus</keyword>
<keyword id="KW-0553">Oncogene</keyword>
<keyword id="KW-1185">Reference proteome</keyword>
<keyword id="KW-0804">Transcription</keyword>
<keyword id="KW-0805">Transcription regulation</keyword>
<keyword id="KW-0899">Viral immunoevasion</keyword>
<keyword id="KW-0862">Zinc</keyword>
<keyword id="KW-0863">Zinc-finger</keyword>
<proteinExistence type="evidence at protein level"/>
<organism>
    <name type="scientific">Bovine papillomavirus type 1</name>
    <dbReference type="NCBI Taxonomy" id="337052"/>
    <lineage>
        <taxon>Viruses</taxon>
        <taxon>Monodnaviria</taxon>
        <taxon>Shotokuvirae</taxon>
        <taxon>Cossaviricota</taxon>
        <taxon>Papovaviricetes</taxon>
        <taxon>Zurhausenvirales</taxon>
        <taxon>Papillomaviridae</taxon>
        <taxon>Firstpapillomavirinae</taxon>
        <taxon>Deltapapillomavirus</taxon>
    </lineage>
</organism>
<feature type="chain" id="PRO_0000133392" description="Protein E7">
    <location>
        <begin position="1"/>
        <end position="127"/>
    </location>
</feature>
<feature type="zinc finger region" evidence="1">
    <location>
        <begin position="82"/>
        <end position="118"/>
    </location>
</feature>
<feature type="region of interest" description="E7 terminal domain" evidence="1">
    <location>
        <begin position="2"/>
        <end position="56"/>
    </location>
</feature>
<feature type="region of interest" description="Disordered" evidence="2">
    <location>
        <begin position="23"/>
        <end position="66"/>
    </location>
</feature>
<feature type="short sequence motif" description="Nuclear export signal" evidence="1">
    <location>
        <begin position="100"/>
        <end position="108"/>
    </location>
</feature>
<name>VE7_BPV1</name>
<accession>P06933</accession>
<dbReference type="EMBL" id="X02346">
    <property type="protein sequence ID" value="CAB46510.1"/>
    <property type="molecule type" value="Genomic_DNA"/>
</dbReference>
<dbReference type="PIR" id="D18151">
    <property type="entry name" value="W7WLEB"/>
</dbReference>
<dbReference type="RefSeq" id="NP_056738.1">
    <property type="nucleotide sequence ID" value="NC_001522.1"/>
</dbReference>
<dbReference type="IntAct" id="P06933">
    <property type="interactions" value="2"/>
</dbReference>
<dbReference type="MINT" id="P06933"/>
<dbReference type="GeneID" id="1489018"/>
<dbReference type="KEGG" id="vg:1489018"/>
<dbReference type="OrthoDB" id="28045at10239"/>
<dbReference type="Proteomes" id="UP000006567">
    <property type="component" value="Genome"/>
</dbReference>
<dbReference type="GO" id="GO:0030430">
    <property type="term" value="C:host cell cytoplasm"/>
    <property type="evidence" value="ECO:0007669"/>
    <property type="project" value="UniProtKB-SubCell"/>
</dbReference>
<dbReference type="GO" id="GO:0042025">
    <property type="term" value="C:host cell nucleus"/>
    <property type="evidence" value="ECO:0007669"/>
    <property type="project" value="UniProtKB-SubCell"/>
</dbReference>
<dbReference type="GO" id="GO:0003677">
    <property type="term" value="F:DNA binding"/>
    <property type="evidence" value="ECO:0007669"/>
    <property type="project" value="UniProtKB-UniRule"/>
</dbReference>
<dbReference type="GO" id="GO:0003700">
    <property type="term" value="F:DNA-binding transcription factor activity"/>
    <property type="evidence" value="ECO:0007669"/>
    <property type="project" value="UniProtKB-UniRule"/>
</dbReference>
<dbReference type="GO" id="GO:0019904">
    <property type="term" value="F:protein domain specific binding"/>
    <property type="evidence" value="ECO:0007669"/>
    <property type="project" value="UniProtKB-UniRule"/>
</dbReference>
<dbReference type="GO" id="GO:0008270">
    <property type="term" value="F:zinc ion binding"/>
    <property type="evidence" value="ECO:0000314"/>
    <property type="project" value="BHF-UCL"/>
</dbReference>
<dbReference type="GO" id="GO:0006351">
    <property type="term" value="P:DNA-templated transcription"/>
    <property type="evidence" value="ECO:0007669"/>
    <property type="project" value="UniProtKB-UniRule"/>
</dbReference>
<dbReference type="GO" id="GO:0039645">
    <property type="term" value="P:symbiont-mediated perturbation of host cell cycle G1/S transition checkpoint"/>
    <property type="evidence" value="ECO:0007669"/>
    <property type="project" value="UniProtKB-UniRule"/>
</dbReference>
<dbReference type="GO" id="GO:0052170">
    <property type="term" value="P:symbiont-mediated suppression of host innate immune response"/>
    <property type="evidence" value="ECO:0007669"/>
    <property type="project" value="UniProtKB-KW"/>
</dbReference>
<dbReference type="GO" id="GO:0039502">
    <property type="term" value="P:symbiont-mediated suppression of host type I interferon-mediated signaling pathway"/>
    <property type="evidence" value="ECO:0007669"/>
    <property type="project" value="UniProtKB-UniRule"/>
</dbReference>
<dbReference type="GO" id="GO:0019087">
    <property type="term" value="P:symbiont-mediated transformation of host cell"/>
    <property type="evidence" value="ECO:0000314"/>
    <property type="project" value="CACAO"/>
</dbReference>
<dbReference type="Gene3D" id="3.30.160.330">
    <property type="match status" value="1"/>
</dbReference>
<dbReference type="HAMAP" id="MF_04004">
    <property type="entry name" value="PPV_E7"/>
    <property type="match status" value="1"/>
</dbReference>
<dbReference type="InterPro" id="IPR000148">
    <property type="entry name" value="Papilloma_E7"/>
</dbReference>
<dbReference type="Pfam" id="PF00527">
    <property type="entry name" value="E7"/>
    <property type="match status" value="1"/>
</dbReference>
<dbReference type="SUPFAM" id="SSF161234">
    <property type="entry name" value="E7 C-terminal domain-like"/>
    <property type="match status" value="1"/>
</dbReference>
<gene>
    <name evidence="1" type="primary">E7</name>
</gene>
<comment type="function">
    <text evidence="1">Plays a role in viral genome replication by driving entry of quiescent cells into the cell cycle. Stimulation of progression from G1 to S phase allows the virus to efficiently use the cellular DNA replicating machinery to achieve viral genome replication. E7 protein has both transforming and trans-activating activities. Induces the disassembly of the E2F1 transcription factor from RB1, with subsequent transcriptional activation of E2F1-regulated S-phase genes. Interferes with host histone deacetylation mediated by HDAC1 and HDAC2, leading to transcription activation. Also plays a role in the inhibition of both antiviral and antiproliferative functions of host interferon alpha. Interaction with host TMEM173/STING impairs the ability of TMEM173/STING to sense cytosolic DNA and promote the production of type I interferon (IFN-alpha and IFN-beta).</text>
</comment>
<comment type="subunit">
    <text evidence="1">Homodimer. Homooligomer. Interacts with host RB1; this interaction induces dissociation of RB1-E2F1 complex thereby disrupting RB1 activity. Interacts with host EP300; this interaction represses EP300 transcriptional activity. Interacts with protein E2; this interaction inhibits E7 oncogenic activity. Interacts with host TMEM173/STING; this interaction impairs the ability of TMEM173/STING to sense cytosolic DNA and promote the production of type I interferon (IFN-alpha and IFN-beta).</text>
</comment>
<comment type="interaction">
    <interactant intactId="EBI-7730971">
        <id>P06933</id>
    </interactant>
    <interactant intactId="EBI-4285947">
        <id>A2AN08</id>
        <label>Ubr4</label>
    </interactant>
    <organismsDiffer>true</organismsDiffer>
    <experiments>2</experiments>
</comment>
<comment type="subcellular location">
    <subcellularLocation>
        <location evidence="1">Host cytoplasm</location>
    </subcellularLocation>
    <subcellularLocation>
        <location evidence="1">Host nucleus</location>
    </subcellularLocation>
    <text evidence="1">Predominantly found in the host nucleus.</text>
</comment>
<comment type="domain">
    <text evidence="1">The E7 terminal domain is an intrinsically disordered domain, whose flexibility and conformational transitions confer target adaptability to the oncoprotein. It allows adaptation to a variety of protein targets and exposes the PEST degradation sequence that regulates its turnover in the cell.</text>
</comment>
<comment type="PTM">
    <text evidence="1">Highly phosphorylated.</text>
</comment>
<comment type="similarity">
    <text evidence="1">Belongs to the papillomaviridae E7 protein family.</text>
</comment>
<evidence type="ECO:0000255" key="1">
    <source>
        <dbReference type="HAMAP-Rule" id="MF_04004"/>
    </source>
</evidence>
<evidence type="ECO:0000256" key="2">
    <source>
        <dbReference type="SAM" id="MobiDB-lite"/>
    </source>
</evidence>
<organismHost>
    <name type="scientific">Bos taurus</name>
    <name type="common">Bovine</name>
    <dbReference type="NCBI Taxonomy" id="9913"/>
</organismHost>
<reference key="1">
    <citation type="journal article" date="1982" name="Nature">
        <title>The primary structure and genetic organization of the bovine papillomavirus type 1 genome.</title>
        <authorList>
            <person name="Chen E.Y."/>
            <person name="Howley P.M."/>
            <person name="Levinson A.D."/>
            <person name="Seeburg P.H."/>
        </authorList>
    </citation>
    <scope>NUCLEOTIDE SEQUENCE [GENOMIC DNA]</scope>
</reference>
<reference key="2">
    <citation type="journal article" date="1983" name="J. Virol.">
        <title>Comparative analysis of the human type 1a and bovine type 1 papillomavirus genomes.</title>
        <authorList>
            <person name="Danos O."/>
            <person name="Engel L.W."/>
            <person name="Chen E.Y."/>
            <person name="Yaniv M."/>
            <person name="Howley P.M."/>
        </authorList>
    </citation>
    <scope>COMPARATIVE ANALYSIS OF HUMAN TYPE 1A AND BOVINE TYPE 1 GENOMES</scope>
</reference>
<protein>
    <recommendedName>
        <fullName evidence="1">Protein E7</fullName>
    </recommendedName>
</protein>
<sequence length="127" mass="13637">MVQGPNTHRNLDDSPAGPLLILSPCAGTPTRSPAAPDAPDFRLPCHFGRPTRKRGPTTPPLSSPGKLCATGPRRVYSVTVCCGNCGKELTFAVKTSSTSLLGFEHLLNSDLDLLCPRCESRERHGKR</sequence>